<evidence type="ECO:0000250" key="1"/>
<evidence type="ECO:0000269" key="2">
    <source>
    </source>
</evidence>
<evidence type="ECO:0000305" key="3"/>
<protein>
    <recommendedName>
        <fullName>Fructose-bisphosphate aldolase 1, chloroplastic</fullName>
        <ecNumber>4.1.2.13</ecNumber>
    </recommendedName>
</protein>
<sequence length="356" mass="38657">GLTIRAGSYADELVKTAKTIASPGRGILAMDESNATCGKRLASIGLENTEVNRQAWRTLLVTVPTLGEYISGAILFEETLYQSTTDGRKIVDVLIEQNIIPGIKVDKGLVPLAGSNDESWCQGLDGLASRSAAYYQQGARFAKWRTVVSIPNGPSALAVKEAAWGLARYAAISQDNGLVPIVEPEILLDGEHGIDRTFEVAQKVWAEVFYYLAENNVQFEGILLKPSMVTPGAESKDKASPTKVAEYTLNLLHRRIPPAVPGIMFLSGGQSEVEATLNLNAMNKSPNPWHVSFSYARALQNTALKTWGGLPENVKAAQEALLFRAKSNSLAQLGKYYGDGESEEAKKELFVKGYSY</sequence>
<name>ALFC1_PEA</name>
<proteinExistence type="evidence at protein level"/>
<accession>Q01516</accession>
<dbReference type="EC" id="4.1.2.13"/>
<dbReference type="EMBL" id="M97476">
    <property type="protein sequence ID" value="AAA33642.1"/>
    <property type="molecule type" value="Genomic_DNA"/>
</dbReference>
<dbReference type="PIR" id="S29047">
    <property type="entry name" value="S29047"/>
</dbReference>
<dbReference type="SMR" id="Q01516"/>
<dbReference type="SABIO-RK" id="Q01516"/>
<dbReference type="UniPathway" id="UPA00109">
    <property type="reaction ID" value="UER00183"/>
</dbReference>
<dbReference type="GO" id="GO:0009507">
    <property type="term" value="C:chloroplast"/>
    <property type="evidence" value="ECO:0007669"/>
    <property type="project" value="UniProtKB-SubCell"/>
</dbReference>
<dbReference type="GO" id="GO:0004332">
    <property type="term" value="F:fructose-bisphosphate aldolase activity"/>
    <property type="evidence" value="ECO:0007669"/>
    <property type="project" value="UniProtKB-EC"/>
</dbReference>
<dbReference type="GO" id="GO:0006096">
    <property type="term" value="P:glycolytic process"/>
    <property type="evidence" value="ECO:0007669"/>
    <property type="project" value="UniProtKB-UniPathway"/>
</dbReference>
<dbReference type="CDD" id="cd00948">
    <property type="entry name" value="FBP_aldolase_I_a"/>
    <property type="match status" value="1"/>
</dbReference>
<dbReference type="FunFam" id="3.20.20.70:FF:000052">
    <property type="entry name" value="Fructose-bisphosphate aldolase"/>
    <property type="match status" value="1"/>
</dbReference>
<dbReference type="Gene3D" id="3.20.20.70">
    <property type="entry name" value="Aldolase class I"/>
    <property type="match status" value="1"/>
</dbReference>
<dbReference type="InterPro" id="IPR029768">
    <property type="entry name" value="Aldolase_I_AS"/>
</dbReference>
<dbReference type="InterPro" id="IPR013785">
    <property type="entry name" value="Aldolase_TIM"/>
</dbReference>
<dbReference type="InterPro" id="IPR000741">
    <property type="entry name" value="FBA_I"/>
</dbReference>
<dbReference type="NCBIfam" id="NF033379">
    <property type="entry name" value="FrucBisAld_I"/>
    <property type="match status" value="1"/>
</dbReference>
<dbReference type="PANTHER" id="PTHR11627">
    <property type="entry name" value="FRUCTOSE-BISPHOSPHATE ALDOLASE"/>
    <property type="match status" value="1"/>
</dbReference>
<dbReference type="Pfam" id="PF00274">
    <property type="entry name" value="Glycolytic"/>
    <property type="match status" value="1"/>
</dbReference>
<dbReference type="SUPFAM" id="SSF51569">
    <property type="entry name" value="Aldolase"/>
    <property type="match status" value="1"/>
</dbReference>
<dbReference type="PROSITE" id="PS00158">
    <property type="entry name" value="ALDOLASE_CLASS_I"/>
    <property type="match status" value="1"/>
</dbReference>
<keyword id="KW-0150">Chloroplast</keyword>
<keyword id="KW-0903">Direct protein sequencing</keyword>
<keyword id="KW-0324">Glycolysis</keyword>
<keyword id="KW-0456">Lyase</keyword>
<keyword id="KW-0934">Plastid</keyword>
<keyword id="KW-0704">Schiff base</keyword>
<keyword id="KW-0809">Transit peptide</keyword>
<reference key="1">
    <citation type="journal article" date="1992" name="Arch. Biochem. Biophys.">
        <title>Chloroplast and cytoplasmic enzymes: isolation and sequencing of cDNAs coding for two distinct pea chloroplast aldolases.</title>
        <authorList>
            <person name="Razdan K."/>
            <person name="Heinrikson R.L."/>
            <person name="Zurcher-Neely H."/>
            <person name="Morris P.W."/>
            <person name="Anderson L.E."/>
        </authorList>
    </citation>
    <scope>NUCLEOTIDE SEQUENCE [GENOMIC DNA]</scope>
    <scope>PROTEIN SEQUENCE OF 7-38</scope>
    <source>
        <strain>cv. Little Marvel</strain>
        <strain>cv. Sparkle</strain>
        <tissue>Leaf</tissue>
    </source>
</reference>
<organism>
    <name type="scientific">Pisum sativum</name>
    <name type="common">Garden pea</name>
    <name type="synonym">Lathyrus oleraceus</name>
    <dbReference type="NCBI Taxonomy" id="3888"/>
    <lineage>
        <taxon>Eukaryota</taxon>
        <taxon>Viridiplantae</taxon>
        <taxon>Streptophyta</taxon>
        <taxon>Embryophyta</taxon>
        <taxon>Tracheophyta</taxon>
        <taxon>Spermatophyta</taxon>
        <taxon>Magnoliopsida</taxon>
        <taxon>eudicotyledons</taxon>
        <taxon>Gunneridae</taxon>
        <taxon>Pentapetalae</taxon>
        <taxon>rosids</taxon>
        <taxon>fabids</taxon>
        <taxon>Fabales</taxon>
        <taxon>Fabaceae</taxon>
        <taxon>Papilionoideae</taxon>
        <taxon>50 kb inversion clade</taxon>
        <taxon>NPAAA clade</taxon>
        <taxon>Hologalegina</taxon>
        <taxon>IRL clade</taxon>
        <taxon>Fabeae</taxon>
        <taxon>Pisum</taxon>
    </lineage>
</organism>
<feature type="transit peptide" description="Chloroplast" evidence="2">
    <location>
        <begin position="1" status="less than"/>
        <end position="6"/>
    </location>
</feature>
<feature type="chain" id="PRO_0000001110" description="Fructose-bisphosphate aldolase 1, chloroplastic">
    <location>
        <begin position="7"/>
        <end position="356"/>
    </location>
</feature>
<feature type="active site" description="Proton acceptor" evidence="1">
    <location>
        <position position="183"/>
    </location>
</feature>
<feature type="active site" description="Schiff-base intermediate with dihydroxyacetone-P" evidence="1">
    <location>
        <position position="225"/>
    </location>
</feature>
<feature type="binding site" evidence="1">
    <location>
        <position position="53"/>
    </location>
    <ligand>
        <name>substrate</name>
    </ligand>
</feature>
<feature type="binding site" evidence="1">
    <location>
        <position position="143"/>
    </location>
    <ligand>
        <name>substrate</name>
    </ligand>
</feature>
<feature type="site" description="Necessary for preference for fructose 1,6-bisphosphate over fructose 1-phosphate" evidence="1">
    <location>
        <position position="356"/>
    </location>
</feature>
<feature type="sequence variant" description="In strain: cv. Little Marvel.">
    <original>A</original>
    <variation>W</variation>
    <location>
        <position position="35"/>
    </location>
</feature>
<feature type="non-terminal residue">
    <location>
        <position position="1"/>
    </location>
</feature>
<comment type="catalytic activity">
    <reaction>
        <text>beta-D-fructose 1,6-bisphosphate = D-glyceraldehyde 3-phosphate + dihydroxyacetone phosphate</text>
        <dbReference type="Rhea" id="RHEA:14729"/>
        <dbReference type="ChEBI" id="CHEBI:32966"/>
        <dbReference type="ChEBI" id="CHEBI:57642"/>
        <dbReference type="ChEBI" id="CHEBI:59776"/>
        <dbReference type="EC" id="4.1.2.13"/>
    </reaction>
</comment>
<comment type="pathway">
    <text>Carbohydrate degradation; glycolysis; D-glyceraldehyde 3-phosphate and glycerone phosphate from D-glucose: step 4/4.</text>
</comment>
<comment type="subcellular location">
    <subcellularLocation>
        <location>Plastid</location>
        <location>Chloroplast</location>
    </subcellularLocation>
</comment>
<comment type="similarity">
    <text evidence="3">Belongs to the class I fructose-bisphosphate aldolase family.</text>
</comment>